<dbReference type="EC" id="3.6.1.66" evidence="1"/>
<dbReference type="EMBL" id="AL157959">
    <property type="protein sequence ID" value="CAM08086.1"/>
    <property type="molecule type" value="Genomic_DNA"/>
</dbReference>
<dbReference type="PIR" id="E81930">
    <property type="entry name" value="E81930"/>
</dbReference>
<dbReference type="SMR" id="Q9JVG5"/>
<dbReference type="EnsemblBacteria" id="CAM08086">
    <property type="protein sequence ID" value="CAM08086"/>
    <property type="gene ID" value="NMA0849"/>
</dbReference>
<dbReference type="KEGG" id="nma:NMA0849"/>
<dbReference type="HOGENOM" id="CLU_082080_0_0_4"/>
<dbReference type="Proteomes" id="UP000000626">
    <property type="component" value="Chromosome"/>
</dbReference>
<dbReference type="GO" id="GO:0005829">
    <property type="term" value="C:cytosol"/>
    <property type="evidence" value="ECO:0007669"/>
    <property type="project" value="TreeGrafter"/>
</dbReference>
<dbReference type="GO" id="GO:0035870">
    <property type="term" value="F:dITP diphosphatase activity"/>
    <property type="evidence" value="ECO:0007669"/>
    <property type="project" value="RHEA"/>
</dbReference>
<dbReference type="GO" id="GO:0036220">
    <property type="term" value="F:ITP diphosphatase activity"/>
    <property type="evidence" value="ECO:0007669"/>
    <property type="project" value="UniProtKB-EC"/>
</dbReference>
<dbReference type="GO" id="GO:0046872">
    <property type="term" value="F:metal ion binding"/>
    <property type="evidence" value="ECO:0007669"/>
    <property type="project" value="UniProtKB-KW"/>
</dbReference>
<dbReference type="GO" id="GO:0000166">
    <property type="term" value="F:nucleotide binding"/>
    <property type="evidence" value="ECO:0007669"/>
    <property type="project" value="UniProtKB-KW"/>
</dbReference>
<dbReference type="GO" id="GO:0017111">
    <property type="term" value="F:ribonucleoside triphosphate phosphatase activity"/>
    <property type="evidence" value="ECO:0007669"/>
    <property type="project" value="InterPro"/>
</dbReference>
<dbReference type="GO" id="GO:0036222">
    <property type="term" value="F:XTP diphosphatase activity"/>
    <property type="evidence" value="ECO:0007669"/>
    <property type="project" value="RHEA"/>
</dbReference>
<dbReference type="GO" id="GO:0009117">
    <property type="term" value="P:nucleotide metabolic process"/>
    <property type="evidence" value="ECO:0007669"/>
    <property type="project" value="UniProtKB-KW"/>
</dbReference>
<dbReference type="GO" id="GO:0009146">
    <property type="term" value="P:purine nucleoside triphosphate catabolic process"/>
    <property type="evidence" value="ECO:0007669"/>
    <property type="project" value="UniProtKB-UniRule"/>
</dbReference>
<dbReference type="CDD" id="cd00515">
    <property type="entry name" value="HAM1"/>
    <property type="match status" value="1"/>
</dbReference>
<dbReference type="FunFam" id="3.90.950.10:FF:000001">
    <property type="entry name" value="dITP/XTP pyrophosphatase"/>
    <property type="match status" value="1"/>
</dbReference>
<dbReference type="Gene3D" id="3.90.950.10">
    <property type="match status" value="1"/>
</dbReference>
<dbReference type="HAMAP" id="MF_01405">
    <property type="entry name" value="Non_canon_purine_NTPase"/>
    <property type="match status" value="1"/>
</dbReference>
<dbReference type="InterPro" id="IPR020922">
    <property type="entry name" value="dITP/XTP_pyrophosphatase"/>
</dbReference>
<dbReference type="InterPro" id="IPR029001">
    <property type="entry name" value="ITPase-like_fam"/>
</dbReference>
<dbReference type="InterPro" id="IPR002637">
    <property type="entry name" value="RdgB/HAM1"/>
</dbReference>
<dbReference type="NCBIfam" id="TIGR00042">
    <property type="entry name" value="RdgB/HAM1 family non-canonical purine NTP pyrophosphatase"/>
    <property type="match status" value="1"/>
</dbReference>
<dbReference type="PANTHER" id="PTHR11067:SF9">
    <property type="entry name" value="INOSINE TRIPHOSPHATE PYROPHOSPHATASE"/>
    <property type="match status" value="1"/>
</dbReference>
<dbReference type="PANTHER" id="PTHR11067">
    <property type="entry name" value="INOSINE TRIPHOSPHATE PYROPHOSPHATASE/HAM1 PROTEIN"/>
    <property type="match status" value="1"/>
</dbReference>
<dbReference type="Pfam" id="PF01725">
    <property type="entry name" value="Ham1p_like"/>
    <property type="match status" value="1"/>
</dbReference>
<dbReference type="SUPFAM" id="SSF52972">
    <property type="entry name" value="ITPase-like"/>
    <property type="match status" value="1"/>
</dbReference>
<accession>Q9JVG5</accession>
<accession>A1IQQ2</accession>
<reference key="1">
    <citation type="journal article" date="2000" name="Nature">
        <title>Complete DNA sequence of a serogroup A strain of Neisseria meningitidis Z2491.</title>
        <authorList>
            <person name="Parkhill J."/>
            <person name="Achtman M."/>
            <person name="James K.D."/>
            <person name="Bentley S.D."/>
            <person name="Churcher C.M."/>
            <person name="Klee S.R."/>
            <person name="Morelli G."/>
            <person name="Basham D."/>
            <person name="Brown D."/>
            <person name="Chillingworth T."/>
            <person name="Davies R.M."/>
            <person name="Davis P."/>
            <person name="Devlin K."/>
            <person name="Feltwell T."/>
            <person name="Hamlin N."/>
            <person name="Holroyd S."/>
            <person name="Jagels K."/>
            <person name="Leather S."/>
            <person name="Moule S."/>
            <person name="Mungall K.L."/>
            <person name="Quail M.A."/>
            <person name="Rajandream M.A."/>
            <person name="Rutherford K.M."/>
            <person name="Simmonds M."/>
            <person name="Skelton J."/>
            <person name="Whitehead S."/>
            <person name="Spratt B.G."/>
            <person name="Barrell B.G."/>
        </authorList>
    </citation>
    <scope>NUCLEOTIDE SEQUENCE [LARGE SCALE GENOMIC DNA]</scope>
    <source>
        <strain>DSM 15465 / Z2491</strain>
    </source>
</reference>
<protein>
    <recommendedName>
        <fullName evidence="1">dITP/XTP pyrophosphatase</fullName>
        <ecNumber evidence="1">3.6.1.66</ecNumber>
    </recommendedName>
    <alternativeName>
        <fullName evidence="1">Non-canonical purine NTP pyrophosphatase</fullName>
    </alternativeName>
    <alternativeName>
        <fullName evidence="1">Non-standard purine NTP pyrophosphatase</fullName>
    </alternativeName>
    <alternativeName>
        <fullName evidence="1">Nucleoside-triphosphate diphosphatase</fullName>
    </alternativeName>
    <alternativeName>
        <fullName evidence="1">Nucleoside-triphosphate pyrophosphatase</fullName>
        <shortName evidence="1">NTPase</shortName>
    </alternativeName>
</protein>
<name>IXTPA_NEIMA</name>
<comment type="function">
    <text evidence="1">Pyrophosphatase that catalyzes the hydrolysis of nucleoside triphosphates to their monophosphate derivatives, with a high preference for the non-canonical purine nucleotides XTP (xanthosine triphosphate), dITP (deoxyinosine triphosphate) and ITP. Seems to function as a house-cleaning enzyme that removes non-canonical purine nucleotides from the nucleotide pool, thus preventing their incorporation into DNA/RNA and avoiding chromosomal lesions.</text>
</comment>
<comment type="catalytic activity">
    <reaction evidence="1">
        <text>XTP + H2O = XMP + diphosphate + H(+)</text>
        <dbReference type="Rhea" id="RHEA:28610"/>
        <dbReference type="ChEBI" id="CHEBI:15377"/>
        <dbReference type="ChEBI" id="CHEBI:15378"/>
        <dbReference type="ChEBI" id="CHEBI:33019"/>
        <dbReference type="ChEBI" id="CHEBI:57464"/>
        <dbReference type="ChEBI" id="CHEBI:61314"/>
        <dbReference type="EC" id="3.6.1.66"/>
    </reaction>
</comment>
<comment type="catalytic activity">
    <reaction evidence="1">
        <text>dITP + H2O = dIMP + diphosphate + H(+)</text>
        <dbReference type="Rhea" id="RHEA:28342"/>
        <dbReference type="ChEBI" id="CHEBI:15377"/>
        <dbReference type="ChEBI" id="CHEBI:15378"/>
        <dbReference type="ChEBI" id="CHEBI:33019"/>
        <dbReference type="ChEBI" id="CHEBI:61194"/>
        <dbReference type="ChEBI" id="CHEBI:61382"/>
        <dbReference type="EC" id="3.6.1.66"/>
    </reaction>
</comment>
<comment type="catalytic activity">
    <reaction evidence="1">
        <text>ITP + H2O = IMP + diphosphate + H(+)</text>
        <dbReference type="Rhea" id="RHEA:29399"/>
        <dbReference type="ChEBI" id="CHEBI:15377"/>
        <dbReference type="ChEBI" id="CHEBI:15378"/>
        <dbReference type="ChEBI" id="CHEBI:33019"/>
        <dbReference type="ChEBI" id="CHEBI:58053"/>
        <dbReference type="ChEBI" id="CHEBI:61402"/>
        <dbReference type="EC" id="3.6.1.66"/>
    </reaction>
</comment>
<comment type="cofactor">
    <cofactor evidence="1">
        <name>Mg(2+)</name>
        <dbReference type="ChEBI" id="CHEBI:18420"/>
    </cofactor>
    <text evidence="1">Binds 1 Mg(2+) ion per subunit.</text>
</comment>
<comment type="subunit">
    <text evidence="1">Homodimer.</text>
</comment>
<comment type="similarity">
    <text evidence="1">Belongs to the HAM1 NTPase family.</text>
</comment>
<keyword id="KW-0378">Hydrolase</keyword>
<keyword id="KW-0460">Magnesium</keyword>
<keyword id="KW-0479">Metal-binding</keyword>
<keyword id="KW-0546">Nucleotide metabolism</keyword>
<keyword id="KW-0547">Nucleotide-binding</keyword>
<evidence type="ECO:0000255" key="1">
    <source>
        <dbReference type="HAMAP-Rule" id="MF_01405"/>
    </source>
</evidence>
<feature type="chain" id="PRO_0000178199" description="dITP/XTP pyrophosphatase">
    <location>
        <begin position="1"/>
        <end position="199"/>
    </location>
</feature>
<feature type="active site" description="Proton acceptor" evidence="1">
    <location>
        <position position="73"/>
    </location>
</feature>
<feature type="binding site" evidence="1">
    <location>
        <begin position="12"/>
        <end position="17"/>
    </location>
    <ligand>
        <name>substrate</name>
    </ligand>
</feature>
<feature type="binding site" evidence="1">
    <location>
        <position position="73"/>
    </location>
    <ligand>
        <name>Mg(2+)</name>
        <dbReference type="ChEBI" id="CHEBI:18420"/>
    </ligand>
</feature>
<feature type="binding site" evidence="1">
    <location>
        <position position="74"/>
    </location>
    <ligand>
        <name>substrate</name>
    </ligand>
</feature>
<feature type="binding site" evidence="1">
    <location>
        <begin position="157"/>
        <end position="160"/>
    </location>
    <ligand>
        <name>substrate</name>
    </ligand>
</feature>
<feature type="binding site" evidence="1">
    <location>
        <position position="180"/>
    </location>
    <ligand>
        <name>substrate</name>
    </ligand>
</feature>
<feature type="binding site" evidence="1">
    <location>
        <begin position="185"/>
        <end position="186"/>
    </location>
    <ligand>
        <name>substrate</name>
    </ligand>
</feature>
<organism>
    <name type="scientific">Neisseria meningitidis serogroup A / serotype 4A (strain DSM 15465 / Z2491)</name>
    <dbReference type="NCBI Taxonomy" id="122587"/>
    <lineage>
        <taxon>Bacteria</taxon>
        <taxon>Pseudomonadati</taxon>
        <taxon>Pseudomonadota</taxon>
        <taxon>Betaproteobacteria</taxon>
        <taxon>Neisseriales</taxon>
        <taxon>Neisseriaceae</taxon>
        <taxon>Neisseria</taxon>
    </lineage>
</organism>
<sequence length="199" mass="21216">MSEKPEKIVLASGNAGKLKEFGNLFEPYGITVLPQSEFSIPECPEPYSTFVENALAKARHAAGHSGLPALADDSGICAAALNGAPGIHSARYAGSNPKSDTANNLKLAAELAGKADKSCCYVCVLVFVRHKDDPRPIIAEGVWHGQWNGVPAGENGFGYDPYFYLPGHGKTAAELDSEVKNRESHRAQALAELLRKLAL</sequence>
<gene>
    <name type="ordered locus">NMA0849</name>
</gene>
<proteinExistence type="inferred from homology"/>